<comment type="function">
    <text evidence="1">Responsible for the release of ribosomes from messenger RNA at the termination of protein biosynthesis. May increase the efficiency of translation by recycling ribosomes from one round of translation to another.</text>
</comment>
<comment type="subcellular location">
    <subcellularLocation>
        <location evidence="1">Cytoplasm</location>
    </subcellularLocation>
</comment>
<comment type="similarity">
    <text evidence="1">Belongs to the RRF family.</text>
</comment>
<evidence type="ECO:0000255" key="1">
    <source>
        <dbReference type="HAMAP-Rule" id="MF_00040"/>
    </source>
</evidence>
<gene>
    <name evidence="1" type="primary">frr</name>
    <name type="ordered locus">Tpet_1384</name>
</gene>
<proteinExistence type="inferred from homology"/>
<accession>A5IMH5</accession>
<dbReference type="EMBL" id="CP000702">
    <property type="protein sequence ID" value="ABQ47398.1"/>
    <property type="molecule type" value="Genomic_DNA"/>
</dbReference>
<dbReference type="RefSeq" id="WP_011943857.1">
    <property type="nucleotide sequence ID" value="NC_009486.1"/>
</dbReference>
<dbReference type="SMR" id="A5IMH5"/>
<dbReference type="STRING" id="390874.Tpet_1384"/>
<dbReference type="KEGG" id="tpt:Tpet_1384"/>
<dbReference type="eggNOG" id="COG0233">
    <property type="taxonomic scope" value="Bacteria"/>
</dbReference>
<dbReference type="HOGENOM" id="CLU_073981_2_0_0"/>
<dbReference type="Proteomes" id="UP000006558">
    <property type="component" value="Chromosome"/>
</dbReference>
<dbReference type="GO" id="GO:0005737">
    <property type="term" value="C:cytoplasm"/>
    <property type="evidence" value="ECO:0007669"/>
    <property type="project" value="UniProtKB-SubCell"/>
</dbReference>
<dbReference type="GO" id="GO:0043023">
    <property type="term" value="F:ribosomal large subunit binding"/>
    <property type="evidence" value="ECO:0007669"/>
    <property type="project" value="TreeGrafter"/>
</dbReference>
<dbReference type="GO" id="GO:0006415">
    <property type="term" value="P:translational termination"/>
    <property type="evidence" value="ECO:0007669"/>
    <property type="project" value="UniProtKB-UniRule"/>
</dbReference>
<dbReference type="CDD" id="cd00520">
    <property type="entry name" value="RRF"/>
    <property type="match status" value="1"/>
</dbReference>
<dbReference type="FunFam" id="1.10.132.20:FF:000001">
    <property type="entry name" value="Ribosome-recycling factor"/>
    <property type="match status" value="1"/>
</dbReference>
<dbReference type="FunFam" id="3.30.1360.40:FF:000001">
    <property type="entry name" value="Ribosome-recycling factor"/>
    <property type="match status" value="1"/>
</dbReference>
<dbReference type="Gene3D" id="3.30.1360.40">
    <property type="match status" value="1"/>
</dbReference>
<dbReference type="Gene3D" id="1.10.132.20">
    <property type="entry name" value="Ribosome-recycling factor"/>
    <property type="match status" value="1"/>
</dbReference>
<dbReference type="HAMAP" id="MF_00040">
    <property type="entry name" value="RRF"/>
    <property type="match status" value="1"/>
</dbReference>
<dbReference type="InterPro" id="IPR002661">
    <property type="entry name" value="Ribosome_recyc_fac"/>
</dbReference>
<dbReference type="InterPro" id="IPR023584">
    <property type="entry name" value="Ribosome_recyc_fac_dom"/>
</dbReference>
<dbReference type="InterPro" id="IPR036191">
    <property type="entry name" value="RRF_sf"/>
</dbReference>
<dbReference type="NCBIfam" id="TIGR00496">
    <property type="entry name" value="frr"/>
    <property type="match status" value="1"/>
</dbReference>
<dbReference type="PANTHER" id="PTHR20982:SF3">
    <property type="entry name" value="MITOCHONDRIAL RIBOSOME RECYCLING FACTOR PSEUDO 1"/>
    <property type="match status" value="1"/>
</dbReference>
<dbReference type="PANTHER" id="PTHR20982">
    <property type="entry name" value="RIBOSOME RECYCLING FACTOR"/>
    <property type="match status" value="1"/>
</dbReference>
<dbReference type="Pfam" id="PF01765">
    <property type="entry name" value="RRF"/>
    <property type="match status" value="1"/>
</dbReference>
<dbReference type="SUPFAM" id="SSF55194">
    <property type="entry name" value="Ribosome recycling factor, RRF"/>
    <property type="match status" value="1"/>
</dbReference>
<reference key="1">
    <citation type="submission" date="2007-05" db="EMBL/GenBank/DDBJ databases">
        <title>Complete sequence of Thermotoga petrophila RKU-1.</title>
        <authorList>
            <consortium name="US DOE Joint Genome Institute"/>
            <person name="Copeland A."/>
            <person name="Lucas S."/>
            <person name="Lapidus A."/>
            <person name="Barry K."/>
            <person name="Glavina del Rio T."/>
            <person name="Dalin E."/>
            <person name="Tice H."/>
            <person name="Pitluck S."/>
            <person name="Sims D."/>
            <person name="Brettin T."/>
            <person name="Bruce D."/>
            <person name="Detter J.C."/>
            <person name="Han C."/>
            <person name="Tapia R."/>
            <person name="Schmutz J."/>
            <person name="Larimer F."/>
            <person name="Land M."/>
            <person name="Hauser L."/>
            <person name="Kyrpides N."/>
            <person name="Mikhailova N."/>
            <person name="Nelson K."/>
            <person name="Gogarten J.P."/>
            <person name="Noll K."/>
            <person name="Richardson P."/>
        </authorList>
    </citation>
    <scope>NUCLEOTIDE SEQUENCE [LARGE SCALE GENOMIC DNA]</scope>
    <source>
        <strain>ATCC BAA-488 / DSM 13995 / JCM 10881 / RKU-1</strain>
    </source>
</reference>
<protein>
    <recommendedName>
        <fullName evidence="1">Ribosome-recycling factor</fullName>
        <shortName evidence="1">RRF</shortName>
    </recommendedName>
    <alternativeName>
        <fullName evidence="1">Ribosome-releasing factor</fullName>
    </alternativeName>
</protein>
<name>RRF_THEP1</name>
<feature type="chain" id="PRO_1000003304" description="Ribosome-recycling factor">
    <location>
        <begin position="1"/>
        <end position="185"/>
    </location>
</feature>
<keyword id="KW-0963">Cytoplasm</keyword>
<keyword id="KW-0648">Protein biosynthesis</keyword>
<sequence length="185" mass="21451">MVNPIIKEAKEKMKKTLERIEDELRKMRTGKPSPAILEEIKVDYYGVPTPVNQLATISVSEERTLVIKPWDKSVLSLIEKAINASDLGLNPINDGNVIRLVFPSPTTEQREKWVKKAKEIVEEGKIAIRNIRRDILKKIKEDQKEGKIPEDDAKRLENEIQKLTDEFIENLDKVFEIKKEEIMEF</sequence>
<organism>
    <name type="scientific">Thermotoga petrophila (strain ATCC BAA-488 / DSM 13995 / JCM 10881 / RKU-1)</name>
    <dbReference type="NCBI Taxonomy" id="390874"/>
    <lineage>
        <taxon>Bacteria</taxon>
        <taxon>Thermotogati</taxon>
        <taxon>Thermotogota</taxon>
        <taxon>Thermotogae</taxon>
        <taxon>Thermotogales</taxon>
        <taxon>Thermotogaceae</taxon>
        <taxon>Thermotoga</taxon>
    </lineage>
</organism>